<gene>
    <name evidence="1" type="primary">rpoA</name>
    <name type="ordered locus">cgR_0683</name>
</gene>
<dbReference type="EC" id="2.7.7.6" evidence="1"/>
<dbReference type="EMBL" id="AP009044">
    <property type="protein sequence ID" value="BAF53654.1"/>
    <property type="molecule type" value="Genomic_DNA"/>
</dbReference>
<dbReference type="RefSeq" id="WP_003854434.1">
    <property type="nucleotide sequence ID" value="NC_009342.1"/>
</dbReference>
<dbReference type="SMR" id="A4QBQ7"/>
<dbReference type="KEGG" id="cgt:cgR_0683"/>
<dbReference type="HOGENOM" id="CLU_053084_0_1_11"/>
<dbReference type="PhylomeDB" id="A4QBQ7"/>
<dbReference type="Proteomes" id="UP000006698">
    <property type="component" value="Chromosome"/>
</dbReference>
<dbReference type="GO" id="GO:0005737">
    <property type="term" value="C:cytoplasm"/>
    <property type="evidence" value="ECO:0007669"/>
    <property type="project" value="UniProtKB-ARBA"/>
</dbReference>
<dbReference type="GO" id="GO:0000428">
    <property type="term" value="C:DNA-directed RNA polymerase complex"/>
    <property type="evidence" value="ECO:0007669"/>
    <property type="project" value="UniProtKB-KW"/>
</dbReference>
<dbReference type="GO" id="GO:0003677">
    <property type="term" value="F:DNA binding"/>
    <property type="evidence" value="ECO:0007669"/>
    <property type="project" value="UniProtKB-UniRule"/>
</dbReference>
<dbReference type="GO" id="GO:0003899">
    <property type="term" value="F:DNA-directed RNA polymerase activity"/>
    <property type="evidence" value="ECO:0007669"/>
    <property type="project" value="UniProtKB-UniRule"/>
</dbReference>
<dbReference type="GO" id="GO:0046983">
    <property type="term" value="F:protein dimerization activity"/>
    <property type="evidence" value="ECO:0007669"/>
    <property type="project" value="InterPro"/>
</dbReference>
<dbReference type="GO" id="GO:0006351">
    <property type="term" value="P:DNA-templated transcription"/>
    <property type="evidence" value="ECO:0007669"/>
    <property type="project" value="UniProtKB-UniRule"/>
</dbReference>
<dbReference type="CDD" id="cd06928">
    <property type="entry name" value="RNAP_alpha_NTD"/>
    <property type="match status" value="1"/>
</dbReference>
<dbReference type="FunFam" id="1.10.150.20:FF:000001">
    <property type="entry name" value="DNA-directed RNA polymerase subunit alpha"/>
    <property type="match status" value="1"/>
</dbReference>
<dbReference type="FunFam" id="2.170.120.12:FF:000001">
    <property type="entry name" value="DNA-directed RNA polymerase subunit alpha"/>
    <property type="match status" value="1"/>
</dbReference>
<dbReference type="Gene3D" id="1.10.150.20">
    <property type="entry name" value="5' to 3' exonuclease, C-terminal subdomain"/>
    <property type="match status" value="1"/>
</dbReference>
<dbReference type="Gene3D" id="2.170.120.12">
    <property type="entry name" value="DNA-directed RNA polymerase, insert domain"/>
    <property type="match status" value="1"/>
</dbReference>
<dbReference type="Gene3D" id="3.30.1360.10">
    <property type="entry name" value="RNA polymerase, RBP11-like subunit"/>
    <property type="match status" value="1"/>
</dbReference>
<dbReference type="HAMAP" id="MF_00059">
    <property type="entry name" value="RNApol_bact_RpoA"/>
    <property type="match status" value="1"/>
</dbReference>
<dbReference type="InterPro" id="IPR011262">
    <property type="entry name" value="DNA-dir_RNA_pol_insert"/>
</dbReference>
<dbReference type="InterPro" id="IPR011263">
    <property type="entry name" value="DNA-dir_RNA_pol_RpoA/D/Rpb3"/>
</dbReference>
<dbReference type="InterPro" id="IPR011773">
    <property type="entry name" value="DNA-dir_RpoA"/>
</dbReference>
<dbReference type="InterPro" id="IPR036603">
    <property type="entry name" value="RBP11-like"/>
</dbReference>
<dbReference type="InterPro" id="IPR011260">
    <property type="entry name" value="RNAP_asu_C"/>
</dbReference>
<dbReference type="InterPro" id="IPR036643">
    <property type="entry name" value="RNApol_insert_sf"/>
</dbReference>
<dbReference type="NCBIfam" id="NF003513">
    <property type="entry name" value="PRK05182.1-2"/>
    <property type="match status" value="1"/>
</dbReference>
<dbReference type="NCBIfam" id="NF003514">
    <property type="entry name" value="PRK05182.1-4"/>
    <property type="match status" value="1"/>
</dbReference>
<dbReference type="NCBIfam" id="NF003519">
    <property type="entry name" value="PRK05182.2-5"/>
    <property type="match status" value="1"/>
</dbReference>
<dbReference type="NCBIfam" id="TIGR02027">
    <property type="entry name" value="rpoA"/>
    <property type="match status" value="1"/>
</dbReference>
<dbReference type="Pfam" id="PF01000">
    <property type="entry name" value="RNA_pol_A_bac"/>
    <property type="match status" value="1"/>
</dbReference>
<dbReference type="Pfam" id="PF03118">
    <property type="entry name" value="RNA_pol_A_CTD"/>
    <property type="match status" value="1"/>
</dbReference>
<dbReference type="Pfam" id="PF01193">
    <property type="entry name" value="RNA_pol_L"/>
    <property type="match status" value="1"/>
</dbReference>
<dbReference type="SMART" id="SM00662">
    <property type="entry name" value="RPOLD"/>
    <property type="match status" value="1"/>
</dbReference>
<dbReference type="SUPFAM" id="SSF47789">
    <property type="entry name" value="C-terminal domain of RNA polymerase alpha subunit"/>
    <property type="match status" value="1"/>
</dbReference>
<dbReference type="SUPFAM" id="SSF56553">
    <property type="entry name" value="Insert subdomain of RNA polymerase alpha subunit"/>
    <property type="match status" value="1"/>
</dbReference>
<dbReference type="SUPFAM" id="SSF55257">
    <property type="entry name" value="RBP11-like subunits of RNA polymerase"/>
    <property type="match status" value="1"/>
</dbReference>
<name>RPOA_CORGB</name>
<evidence type="ECO:0000255" key="1">
    <source>
        <dbReference type="HAMAP-Rule" id="MF_00059"/>
    </source>
</evidence>
<evidence type="ECO:0000256" key="2">
    <source>
        <dbReference type="SAM" id="MobiDB-lite"/>
    </source>
</evidence>
<organism>
    <name type="scientific">Corynebacterium glutamicum (strain R)</name>
    <dbReference type="NCBI Taxonomy" id="340322"/>
    <lineage>
        <taxon>Bacteria</taxon>
        <taxon>Bacillati</taxon>
        <taxon>Actinomycetota</taxon>
        <taxon>Actinomycetes</taxon>
        <taxon>Mycobacteriales</taxon>
        <taxon>Corynebacteriaceae</taxon>
        <taxon>Corynebacterium</taxon>
    </lineage>
</organism>
<proteinExistence type="inferred from homology"/>
<accession>A4QBQ7</accession>
<reference key="1">
    <citation type="journal article" date="2007" name="Microbiology">
        <title>Comparative analysis of the Corynebacterium glutamicum group and complete genome sequence of strain R.</title>
        <authorList>
            <person name="Yukawa H."/>
            <person name="Omumasaba C.A."/>
            <person name="Nonaka H."/>
            <person name="Kos P."/>
            <person name="Okai N."/>
            <person name="Suzuki N."/>
            <person name="Suda M."/>
            <person name="Tsuge Y."/>
            <person name="Watanabe J."/>
            <person name="Ikeda Y."/>
            <person name="Vertes A.A."/>
            <person name="Inui M."/>
        </authorList>
    </citation>
    <scope>NUCLEOTIDE SEQUENCE [LARGE SCALE GENOMIC DNA]</scope>
    <source>
        <strain>R</strain>
    </source>
</reference>
<feature type="chain" id="PRO_0000296797" description="DNA-directed RNA polymerase subunit alpha">
    <location>
        <begin position="1"/>
        <end position="338"/>
    </location>
</feature>
<feature type="region of interest" description="Alpha N-terminal domain (alpha-NTD)" evidence="1">
    <location>
        <begin position="1"/>
        <end position="225"/>
    </location>
</feature>
<feature type="region of interest" description="Alpha C-terminal domain (alpha-CTD)" evidence="1">
    <location>
        <begin position="240"/>
        <end position="338"/>
    </location>
</feature>
<feature type="region of interest" description="Disordered" evidence="2">
    <location>
        <begin position="319"/>
        <end position="338"/>
    </location>
</feature>
<protein>
    <recommendedName>
        <fullName evidence="1">DNA-directed RNA polymerase subunit alpha</fullName>
        <shortName evidence="1">RNAP subunit alpha</shortName>
        <ecNumber evidence="1">2.7.7.6</ecNumber>
    </recommendedName>
    <alternativeName>
        <fullName evidence="1">RNA polymerase subunit alpha</fullName>
    </alternativeName>
    <alternativeName>
        <fullName evidence="1">Transcriptase subunit alpha</fullName>
    </alternativeName>
</protein>
<comment type="function">
    <text evidence="1">DNA-dependent RNA polymerase catalyzes the transcription of DNA into RNA using the four ribonucleoside triphosphates as substrates.</text>
</comment>
<comment type="catalytic activity">
    <reaction evidence="1">
        <text>RNA(n) + a ribonucleoside 5'-triphosphate = RNA(n+1) + diphosphate</text>
        <dbReference type="Rhea" id="RHEA:21248"/>
        <dbReference type="Rhea" id="RHEA-COMP:14527"/>
        <dbReference type="Rhea" id="RHEA-COMP:17342"/>
        <dbReference type="ChEBI" id="CHEBI:33019"/>
        <dbReference type="ChEBI" id="CHEBI:61557"/>
        <dbReference type="ChEBI" id="CHEBI:140395"/>
        <dbReference type="EC" id="2.7.7.6"/>
    </reaction>
</comment>
<comment type="subunit">
    <text evidence="1">Homodimer. The RNAP catalytic core consists of 2 alpha, 1 beta, 1 beta' and 1 omega subunit. When a sigma factor is associated with the core the holoenzyme is formed, which can initiate transcription.</text>
</comment>
<comment type="domain">
    <text evidence="1">The N-terminal domain is essential for RNAP assembly and basal transcription, whereas the C-terminal domain is involved in interaction with transcriptional regulators and with upstream promoter elements.</text>
</comment>
<comment type="similarity">
    <text evidence="1">Belongs to the RNA polymerase alpha chain family.</text>
</comment>
<sequence>MLISQRPTITEEFVDNARSRFVIEPLEPGFGYTLGNSLRRTLLSSIPGAAVTSVKIDGVLHEFTTISGVKEDVSDIILNIKGLVLSSDSDEPVVMQLVKEGPGVVTAGDIQPPAGVEIHNPDLHIATLNETAKIEIELIVERGRGYVPATVTATGGEIGRIPVDQIYSPVLKVSYKVEATRVEQRTDFDKLVIDVETKNSITARDALASAGKTLVELFGLARELNIAAEGIEIGPSPQETEYIAAYSMPIEDLDFSVRSYNCLKREDIHTVGELAERAESDLLDIRNFGQKSINEVKIKLAGLGLTLKDAPEDFDPSTLEGYDAETGGYIDVEAEDSE</sequence>
<keyword id="KW-0240">DNA-directed RNA polymerase</keyword>
<keyword id="KW-0548">Nucleotidyltransferase</keyword>
<keyword id="KW-0804">Transcription</keyword>
<keyword id="KW-0808">Transferase</keyword>